<proteinExistence type="inferred from homology"/>
<feature type="chain" id="PRO_0000292092" description="Fe/S biogenesis protein NfuA">
    <location>
        <begin position="1"/>
        <end position="192"/>
    </location>
</feature>
<feature type="binding site" evidence="1">
    <location>
        <position position="149"/>
    </location>
    <ligand>
        <name>[4Fe-4S] cluster</name>
        <dbReference type="ChEBI" id="CHEBI:49883"/>
    </ligand>
</feature>
<feature type="binding site" evidence="1">
    <location>
        <position position="152"/>
    </location>
    <ligand>
        <name>[4Fe-4S] cluster</name>
        <dbReference type="ChEBI" id="CHEBI:49883"/>
    </ligand>
</feature>
<comment type="function">
    <text evidence="1">Involved in iron-sulfur cluster biogenesis. Binds a 4Fe-4S cluster, can transfer this cluster to apoproteins, and thereby intervenes in the maturation of Fe/S proteins. Could also act as a scaffold/chaperone for damaged Fe/S proteins.</text>
</comment>
<comment type="cofactor">
    <cofactor evidence="1">
        <name>[4Fe-4S] cluster</name>
        <dbReference type="ChEBI" id="CHEBI:49883"/>
    </cofactor>
    <text evidence="1">Binds 1 [4Fe-4S] cluster per subunit. The cluster is presumably bound at the interface of two monomers.</text>
</comment>
<comment type="subunit">
    <text evidence="1">Homodimer.</text>
</comment>
<comment type="similarity">
    <text evidence="1">Belongs to the NfuA family.</text>
</comment>
<accession>A3Q930</accession>
<sequence length="192" mass="20768">MITISDAAQAHFVKLLADQPEGTHIRVFVISPGTPSAECGVSYCPPDAVEADDIELEFNGFHAMVDEKSAPFLEDASIDFVTDQLGSQLTLKAPNAKMRKVDADAPLKERIEYVIQSEINPQLASHGGNIMLVDIDEAGIAILQFGGGCNGCSMVDVTLKDGIEKQLLDMFPGELTGVRDVTEHQHGEHSYQ</sequence>
<dbReference type="EMBL" id="CP000606">
    <property type="protein sequence ID" value="ABO21978.1"/>
    <property type="molecule type" value="Genomic_DNA"/>
</dbReference>
<dbReference type="RefSeq" id="WP_011863915.1">
    <property type="nucleotide sequence ID" value="NC_009092.1"/>
</dbReference>
<dbReference type="SMR" id="A3Q930"/>
<dbReference type="STRING" id="323850.Shew_0106"/>
<dbReference type="KEGG" id="slo:Shew_0106"/>
<dbReference type="eggNOG" id="COG0316">
    <property type="taxonomic scope" value="Bacteria"/>
</dbReference>
<dbReference type="eggNOG" id="COG0694">
    <property type="taxonomic scope" value="Bacteria"/>
</dbReference>
<dbReference type="HOGENOM" id="CLU_094569_0_0_6"/>
<dbReference type="OrthoDB" id="9785450at2"/>
<dbReference type="Proteomes" id="UP000001558">
    <property type="component" value="Chromosome"/>
</dbReference>
<dbReference type="GO" id="GO:0051539">
    <property type="term" value="F:4 iron, 4 sulfur cluster binding"/>
    <property type="evidence" value="ECO:0007669"/>
    <property type="project" value="UniProtKB-UniRule"/>
</dbReference>
<dbReference type="GO" id="GO:0005506">
    <property type="term" value="F:iron ion binding"/>
    <property type="evidence" value="ECO:0007669"/>
    <property type="project" value="InterPro"/>
</dbReference>
<dbReference type="GO" id="GO:0016226">
    <property type="term" value="P:iron-sulfur cluster assembly"/>
    <property type="evidence" value="ECO:0007669"/>
    <property type="project" value="UniProtKB-UniRule"/>
</dbReference>
<dbReference type="GO" id="GO:0051604">
    <property type="term" value="P:protein maturation"/>
    <property type="evidence" value="ECO:0007669"/>
    <property type="project" value="UniProtKB-UniRule"/>
</dbReference>
<dbReference type="Gene3D" id="3.30.300.130">
    <property type="entry name" value="Fe-S cluster assembly (FSCA)"/>
    <property type="match status" value="1"/>
</dbReference>
<dbReference type="Gene3D" id="2.60.300.12">
    <property type="entry name" value="HesB-like domain"/>
    <property type="match status" value="1"/>
</dbReference>
<dbReference type="HAMAP" id="MF_01637">
    <property type="entry name" value="Fe_S_biogen_NfuA"/>
    <property type="match status" value="1"/>
</dbReference>
<dbReference type="InterPro" id="IPR017726">
    <property type="entry name" value="Fe/S_biogenesis_protein_NfuA"/>
</dbReference>
<dbReference type="InterPro" id="IPR000361">
    <property type="entry name" value="FeS_biogenesis"/>
</dbReference>
<dbReference type="InterPro" id="IPR034904">
    <property type="entry name" value="FSCA_dom_sf"/>
</dbReference>
<dbReference type="InterPro" id="IPR035903">
    <property type="entry name" value="HesB-like_dom_sf"/>
</dbReference>
<dbReference type="InterPro" id="IPR001075">
    <property type="entry name" value="NIF_FeS_clus_asmbl_NifU_C"/>
</dbReference>
<dbReference type="NCBIfam" id="NF008392">
    <property type="entry name" value="PRK11190.1"/>
    <property type="match status" value="1"/>
</dbReference>
<dbReference type="NCBIfam" id="TIGR03341">
    <property type="entry name" value="YhgI_GntY"/>
    <property type="match status" value="1"/>
</dbReference>
<dbReference type="PANTHER" id="PTHR11178:SF51">
    <property type="entry name" value="FE_S BIOGENESIS PROTEIN NFUA"/>
    <property type="match status" value="1"/>
</dbReference>
<dbReference type="PANTHER" id="PTHR11178">
    <property type="entry name" value="IRON-SULFUR CLUSTER SCAFFOLD PROTEIN NFU-RELATED"/>
    <property type="match status" value="1"/>
</dbReference>
<dbReference type="Pfam" id="PF01521">
    <property type="entry name" value="Fe-S_biosyn"/>
    <property type="match status" value="1"/>
</dbReference>
<dbReference type="Pfam" id="PF01106">
    <property type="entry name" value="NifU"/>
    <property type="match status" value="1"/>
</dbReference>
<dbReference type="SUPFAM" id="SSF117916">
    <property type="entry name" value="Fe-S cluster assembly (FSCA) domain-like"/>
    <property type="match status" value="1"/>
</dbReference>
<dbReference type="SUPFAM" id="SSF89360">
    <property type="entry name" value="HesB-like domain"/>
    <property type="match status" value="1"/>
</dbReference>
<evidence type="ECO:0000255" key="1">
    <source>
        <dbReference type="HAMAP-Rule" id="MF_01637"/>
    </source>
</evidence>
<gene>
    <name evidence="1" type="primary">nfuA</name>
    <name type="ordered locus">Shew_0106</name>
</gene>
<keyword id="KW-0004">4Fe-4S</keyword>
<keyword id="KW-0408">Iron</keyword>
<keyword id="KW-0411">Iron-sulfur</keyword>
<keyword id="KW-0479">Metal-binding</keyword>
<keyword id="KW-1185">Reference proteome</keyword>
<name>NFUA_SHELP</name>
<organism>
    <name type="scientific">Shewanella loihica (strain ATCC BAA-1088 / PV-4)</name>
    <dbReference type="NCBI Taxonomy" id="323850"/>
    <lineage>
        <taxon>Bacteria</taxon>
        <taxon>Pseudomonadati</taxon>
        <taxon>Pseudomonadota</taxon>
        <taxon>Gammaproteobacteria</taxon>
        <taxon>Alteromonadales</taxon>
        <taxon>Shewanellaceae</taxon>
        <taxon>Shewanella</taxon>
    </lineage>
</organism>
<protein>
    <recommendedName>
        <fullName evidence="1">Fe/S biogenesis protein NfuA</fullName>
    </recommendedName>
</protein>
<reference key="1">
    <citation type="submission" date="2007-03" db="EMBL/GenBank/DDBJ databases">
        <title>Complete sequence of Shewanella loihica PV-4.</title>
        <authorList>
            <consortium name="US DOE Joint Genome Institute"/>
            <person name="Copeland A."/>
            <person name="Lucas S."/>
            <person name="Lapidus A."/>
            <person name="Barry K."/>
            <person name="Detter J.C."/>
            <person name="Glavina del Rio T."/>
            <person name="Hammon N."/>
            <person name="Israni S."/>
            <person name="Dalin E."/>
            <person name="Tice H."/>
            <person name="Pitluck S."/>
            <person name="Chain P."/>
            <person name="Malfatti S."/>
            <person name="Shin M."/>
            <person name="Vergez L."/>
            <person name="Schmutz J."/>
            <person name="Larimer F."/>
            <person name="Land M."/>
            <person name="Hauser L."/>
            <person name="Kyrpides N."/>
            <person name="Mikhailova N."/>
            <person name="Romine M.F."/>
            <person name="Serres G."/>
            <person name="Fredrickson J."/>
            <person name="Tiedje J."/>
            <person name="Richardson P."/>
        </authorList>
    </citation>
    <scope>NUCLEOTIDE SEQUENCE [LARGE SCALE GENOMIC DNA]</scope>
    <source>
        <strain>ATCC BAA-1088 / PV-4</strain>
    </source>
</reference>